<sequence>MSKLPLLPTTVIGSYPRPKWLRESIRLHKAGKISDEDLQEAFNDAVIAVLKDHYNAGVDVPTDGEVRRDEMVEFFAERIKGFKFYGPVRVWGTAYYRKPSVVSKIEYKKPMLVDEFTFAKSVSYTDNLKITITGPYTIAEWSYNEYYKNKKDLVFDLAKAINQEIKNLVEAGAKIIQIDEPALHTRREDVSWGVEAVNEAVKGVNAKLVMHICYGEYSFVAPYLNELKVDQINFAFKIYNYKPLELLKRYGFDKELGAGVIDVHNRRIETSEEVANDIRKILEYFTPEKVWINPDCGLKLLSRKIAYQKLVSMVEGTKVVREELKRKGYSVD</sequence>
<evidence type="ECO:0000255" key="1">
    <source>
        <dbReference type="HAMAP-Rule" id="MF_00288"/>
    </source>
</evidence>
<evidence type="ECO:0000305" key="2"/>
<proteinExistence type="inferred from homology"/>
<protein>
    <recommendedName>
        <fullName evidence="1">Methionine synthase</fullName>
        <ecNumber evidence="1">2.1.1.-</ecNumber>
    </recommendedName>
    <alternativeName>
        <fullName evidence="1">Homocysteine methyltransferase</fullName>
    </alternativeName>
</protein>
<reference key="1">
    <citation type="journal article" date="2009" name="Proc. Natl. Acad. Sci. U.S.A.">
        <title>Biogeography of the Sulfolobus islandicus pan-genome.</title>
        <authorList>
            <person name="Reno M.L."/>
            <person name="Held N.L."/>
            <person name="Fields C.J."/>
            <person name="Burke P.V."/>
            <person name="Whitaker R.J."/>
        </authorList>
    </citation>
    <scope>NUCLEOTIDE SEQUENCE [LARGE SCALE GENOMIC DNA]</scope>
    <source>
        <strain>M.16.4 / Kamchatka #3</strain>
    </source>
</reference>
<name>METE_SACI6</name>
<accession>C4KID3</accession>
<dbReference type="EC" id="2.1.1.-" evidence="1"/>
<dbReference type="EMBL" id="CP001402">
    <property type="protein sequence ID" value="ACR42347.1"/>
    <property type="molecule type" value="Genomic_DNA"/>
</dbReference>
<dbReference type="RefSeq" id="WP_012711676.1">
    <property type="nucleotide sequence ID" value="NC_012726.1"/>
</dbReference>
<dbReference type="SMR" id="C4KID3"/>
<dbReference type="KEGG" id="sid:M164_1743"/>
<dbReference type="HOGENOM" id="CLU_040013_3_2_2"/>
<dbReference type="UniPathway" id="UPA00051"/>
<dbReference type="Proteomes" id="UP000001479">
    <property type="component" value="Chromosome"/>
</dbReference>
<dbReference type="GO" id="GO:0003871">
    <property type="term" value="F:5-methyltetrahydropteroyltriglutamate-homocysteine S-methyltransferase activity"/>
    <property type="evidence" value="ECO:0007669"/>
    <property type="project" value="InterPro"/>
</dbReference>
<dbReference type="GO" id="GO:0008270">
    <property type="term" value="F:zinc ion binding"/>
    <property type="evidence" value="ECO:0007669"/>
    <property type="project" value="InterPro"/>
</dbReference>
<dbReference type="GO" id="GO:0009086">
    <property type="term" value="P:methionine biosynthetic process"/>
    <property type="evidence" value="ECO:0007669"/>
    <property type="project" value="UniProtKB-UniRule"/>
</dbReference>
<dbReference type="GO" id="GO:0032259">
    <property type="term" value="P:methylation"/>
    <property type="evidence" value="ECO:0007669"/>
    <property type="project" value="UniProtKB-KW"/>
</dbReference>
<dbReference type="CDD" id="cd03311">
    <property type="entry name" value="CIMS_C_terminal_like"/>
    <property type="match status" value="1"/>
</dbReference>
<dbReference type="Gene3D" id="3.20.20.210">
    <property type="match status" value="1"/>
</dbReference>
<dbReference type="HAMAP" id="MF_00288">
    <property type="entry name" value="MetE"/>
    <property type="match status" value="1"/>
</dbReference>
<dbReference type="InterPro" id="IPR002629">
    <property type="entry name" value="Met_Synth_C/arc"/>
</dbReference>
<dbReference type="InterPro" id="IPR022921">
    <property type="entry name" value="MetE_arc"/>
</dbReference>
<dbReference type="InterPro" id="IPR038071">
    <property type="entry name" value="UROD/MetE-like_sf"/>
</dbReference>
<dbReference type="NCBIfam" id="NF003317">
    <property type="entry name" value="PRK04326.1"/>
    <property type="match status" value="1"/>
</dbReference>
<dbReference type="PANTHER" id="PTHR30519">
    <property type="entry name" value="5-METHYLTETRAHYDROPTEROYLTRIGLUTAMATE--HOMOCYSTEINE METHYLTRANSFERASE"/>
    <property type="match status" value="1"/>
</dbReference>
<dbReference type="Pfam" id="PF01717">
    <property type="entry name" value="Meth_synt_2"/>
    <property type="match status" value="1"/>
</dbReference>
<dbReference type="SUPFAM" id="SSF51726">
    <property type="entry name" value="UROD/MetE-like"/>
    <property type="match status" value="1"/>
</dbReference>
<keyword id="KW-0028">Amino-acid biosynthesis</keyword>
<keyword id="KW-0479">Metal-binding</keyword>
<keyword id="KW-0486">Methionine biosynthesis</keyword>
<keyword id="KW-0489">Methyltransferase</keyword>
<keyword id="KW-0808">Transferase</keyword>
<keyword id="KW-0862">Zinc</keyword>
<feature type="chain" id="PRO_1000204854" description="Methionine synthase">
    <location>
        <begin position="1"/>
        <end position="332"/>
    </location>
</feature>
<feature type="binding site" evidence="1">
    <location>
        <position position="211"/>
    </location>
    <ligand>
        <name>Zn(2+)</name>
        <dbReference type="ChEBI" id="CHEBI:29105"/>
        <note>catalytic</note>
    </ligand>
</feature>
<feature type="binding site" evidence="1">
    <location>
        <position position="213"/>
    </location>
    <ligand>
        <name>Zn(2+)</name>
        <dbReference type="ChEBI" id="CHEBI:29105"/>
        <note>catalytic</note>
    </ligand>
</feature>
<feature type="binding site" evidence="1">
    <location>
        <position position="296"/>
    </location>
    <ligand>
        <name>Zn(2+)</name>
        <dbReference type="ChEBI" id="CHEBI:29105"/>
        <note>catalytic</note>
    </ligand>
</feature>
<organism>
    <name type="scientific">Saccharolobus islandicus (strain M.16.4 / Kamchatka #3)</name>
    <name type="common">Sulfolobus islandicus</name>
    <dbReference type="NCBI Taxonomy" id="426118"/>
    <lineage>
        <taxon>Archaea</taxon>
        <taxon>Thermoproteota</taxon>
        <taxon>Thermoprotei</taxon>
        <taxon>Sulfolobales</taxon>
        <taxon>Sulfolobaceae</taxon>
        <taxon>Saccharolobus</taxon>
    </lineage>
</organism>
<gene>
    <name evidence="1" type="primary">metE</name>
    <name type="ordered locus">M164_1743</name>
</gene>
<comment type="function">
    <text evidence="1">Catalyzes the transfer of a methyl group to L-homocysteine resulting in methionine formation. The physiological methyl donor is unknown.</text>
</comment>
<comment type="cofactor">
    <cofactor evidence="1">
        <name>Zn(2+)</name>
        <dbReference type="ChEBI" id="CHEBI:29105"/>
    </cofactor>
    <text evidence="1">Binds 1 zinc ion per subunit.</text>
</comment>
<comment type="pathway">
    <text evidence="1">Amino-acid biosynthesis; L-methionine biosynthesis via de novo pathway.</text>
</comment>
<comment type="similarity">
    <text evidence="1 2">Belongs to the archaeal MetE family.</text>
</comment>